<sequence>KKLGKKGLTPSKIGIILRDSHGVAQVRFVNGNKILRIMKSVGLKPDIPEDLYHMIKKAVAIRKHLERNRKDKDGKFRLILVESRIHRLARYYKTKSVLPPNWKYESSTASALVA</sequence>
<name>RS13_MUSDO</name>
<comment type="similarity">
    <text evidence="1">Belongs to the universal ribosomal protein uS15 family.</text>
</comment>
<feature type="chain" id="PRO_0000115677" description="Small ribosomal subunit protein uS15">
    <location>
        <begin position="1" status="less than"/>
        <end position="114"/>
    </location>
</feature>
<feature type="non-terminal residue">
    <location>
        <position position="1"/>
    </location>
</feature>
<reference key="1">
    <citation type="submission" date="1991-10" db="EMBL/GenBank/DDBJ databases">
        <authorList>
            <person name="Zhou Z.H."/>
            <person name="Syvanen M."/>
        </authorList>
    </citation>
    <scope>NUCLEOTIDE SEQUENCE [MRNA]</scope>
    <source>
        <strain>Cornell-R</strain>
    </source>
</reference>
<proteinExistence type="evidence at transcript level"/>
<protein>
    <recommendedName>
        <fullName evidence="1">Small ribosomal subunit protein uS15</fullName>
    </recommendedName>
    <alternativeName>
        <fullName>40S ribosomal protein S13</fullName>
    </alternativeName>
</protein>
<dbReference type="EMBL" id="X62673">
    <property type="protein sequence ID" value="CAA44547.1"/>
    <property type="molecule type" value="mRNA"/>
</dbReference>
<dbReference type="PIR" id="S18109">
    <property type="entry name" value="S18109"/>
</dbReference>
<dbReference type="SMR" id="P27072"/>
<dbReference type="STRING" id="7370.P27072"/>
<dbReference type="EnsemblMetazoa" id="MDOA007974-RA">
    <property type="protein sequence ID" value="MDOA007974-PA"/>
    <property type="gene ID" value="MDOA007974"/>
</dbReference>
<dbReference type="VEuPathDB" id="VectorBase:MDOA007974"/>
<dbReference type="VEuPathDB" id="VectorBase:MDOMA2_003475"/>
<dbReference type="eggNOG" id="KOG0400">
    <property type="taxonomic scope" value="Eukaryota"/>
</dbReference>
<dbReference type="Proteomes" id="UP000694905">
    <property type="component" value="Unplaced"/>
</dbReference>
<dbReference type="GO" id="GO:0022627">
    <property type="term" value="C:cytosolic small ribosomal subunit"/>
    <property type="evidence" value="ECO:0007669"/>
    <property type="project" value="TreeGrafter"/>
</dbReference>
<dbReference type="GO" id="GO:0005730">
    <property type="term" value="C:nucleolus"/>
    <property type="evidence" value="ECO:0007669"/>
    <property type="project" value="TreeGrafter"/>
</dbReference>
<dbReference type="GO" id="GO:0070181">
    <property type="term" value="F:small ribosomal subunit rRNA binding"/>
    <property type="evidence" value="ECO:0007669"/>
    <property type="project" value="TreeGrafter"/>
</dbReference>
<dbReference type="GO" id="GO:0003735">
    <property type="term" value="F:structural constituent of ribosome"/>
    <property type="evidence" value="ECO:0007669"/>
    <property type="project" value="InterPro"/>
</dbReference>
<dbReference type="GO" id="GO:0006412">
    <property type="term" value="P:translation"/>
    <property type="evidence" value="ECO:0007669"/>
    <property type="project" value="InterPro"/>
</dbReference>
<dbReference type="CDD" id="cd00353">
    <property type="entry name" value="Ribosomal_S15p_S13e"/>
    <property type="match status" value="1"/>
</dbReference>
<dbReference type="FunFam" id="1.10.287.10:FF:000003">
    <property type="entry name" value="40S ribosomal protein S13"/>
    <property type="match status" value="1"/>
</dbReference>
<dbReference type="FunFam" id="4.10.860.130:FF:000001">
    <property type="entry name" value="40S ribosomal protein S13"/>
    <property type="match status" value="1"/>
</dbReference>
<dbReference type="Gene3D" id="4.10.860.130">
    <property type="match status" value="1"/>
</dbReference>
<dbReference type="Gene3D" id="1.10.287.10">
    <property type="entry name" value="S15/NS1, RNA-binding"/>
    <property type="match status" value="1"/>
</dbReference>
<dbReference type="InterPro" id="IPR000589">
    <property type="entry name" value="Ribosomal_uS15"/>
</dbReference>
<dbReference type="InterPro" id="IPR023029">
    <property type="entry name" value="Ribosomal_uS15_arc_euk"/>
</dbReference>
<dbReference type="InterPro" id="IPR012606">
    <property type="entry name" value="Ribosomal_uS15_N"/>
</dbReference>
<dbReference type="InterPro" id="IPR009068">
    <property type="entry name" value="uS15_NS1_RNA-bd_sf"/>
</dbReference>
<dbReference type="PANTHER" id="PTHR11885">
    <property type="entry name" value="RIBOSOMAL PROTEIN S15P/S13E"/>
    <property type="match status" value="1"/>
</dbReference>
<dbReference type="PANTHER" id="PTHR11885:SF6">
    <property type="entry name" value="SMALL RIBOSOMAL SUBUNIT PROTEIN US15"/>
    <property type="match status" value="1"/>
</dbReference>
<dbReference type="Pfam" id="PF08069">
    <property type="entry name" value="Ribosomal_S13_N"/>
    <property type="match status" value="1"/>
</dbReference>
<dbReference type="Pfam" id="PF00312">
    <property type="entry name" value="Ribosomal_S15"/>
    <property type="match status" value="1"/>
</dbReference>
<dbReference type="SMART" id="SM01387">
    <property type="entry name" value="Ribosomal_S15"/>
    <property type="match status" value="1"/>
</dbReference>
<dbReference type="SUPFAM" id="SSF47060">
    <property type="entry name" value="S15/NS1 RNA-binding domain"/>
    <property type="match status" value="1"/>
</dbReference>
<dbReference type="PROSITE" id="PS00362">
    <property type="entry name" value="RIBOSOMAL_S15"/>
    <property type="match status" value="1"/>
</dbReference>
<evidence type="ECO:0000305" key="1"/>
<accession>P27072</accession>
<keyword id="KW-1185">Reference proteome</keyword>
<keyword id="KW-0687">Ribonucleoprotein</keyword>
<keyword id="KW-0689">Ribosomal protein</keyword>
<organism>
    <name type="scientific">Musca domestica</name>
    <name type="common">House fly</name>
    <dbReference type="NCBI Taxonomy" id="7370"/>
    <lineage>
        <taxon>Eukaryota</taxon>
        <taxon>Metazoa</taxon>
        <taxon>Ecdysozoa</taxon>
        <taxon>Arthropoda</taxon>
        <taxon>Hexapoda</taxon>
        <taxon>Insecta</taxon>
        <taxon>Pterygota</taxon>
        <taxon>Neoptera</taxon>
        <taxon>Endopterygota</taxon>
        <taxon>Diptera</taxon>
        <taxon>Brachycera</taxon>
        <taxon>Muscomorpha</taxon>
        <taxon>Muscoidea</taxon>
        <taxon>Muscidae</taxon>
        <taxon>Musca</taxon>
    </lineage>
</organism>
<gene>
    <name type="primary">RpS13</name>
</gene>